<reference evidence="18" key="1">
    <citation type="journal article" date="1998" name="Science">
        <title>Genome sequence of the nematode C. elegans: a platform for investigating biology.</title>
        <authorList>
            <consortium name="The C. elegans sequencing consortium"/>
        </authorList>
    </citation>
    <scope>NUCLEOTIDE SEQUENCE [LARGE SCALE GENOMIC DNA]</scope>
    <source>
        <strain evidence="18">Bristol N2</strain>
    </source>
</reference>
<reference evidence="15" key="2">
    <citation type="journal article" date="2009" name="Development">
        <title>Myosin II regulation during C. elegans embryonic elongation: LET-502/ROCK, MRCK-1 and PAK-1, three kinases with different roles.</title>
        <authorList>
            <person name="Gally C."/>
            <person name="Wissler F."/>
            <person name="Zahreddine H."/>
            <person name="Quintin S."/>
            <person name="Landmann F."/>
            <person name="Labouesse M."/>
        </authorList>
    </citation>
    <scope>FUNCTION</scope>
    <scope>SUBCELLULAR LOCATION</scope>
    <scope>TISSUE SPECIFICITY</scope>
    <scope>DISRUPTION PHENOTYPE</scope>
</reference>
<reference key="3">
    <citation type="journal article" date="2015" name="Nat. Commun.">
        <title>CCM-3/STRIPAK promotes seamless tube extension through endocytic recycling.</title>
        <authorList>
            <person name="Lant B."/>
            <person name="Yu B."/>
            <person name="Goudreault M."/>
            <person name="Holmyard D."/>
            <person name="Knight J.D."/>
            <person name="Xu P."/>
            <person name="Zhao L."/>
            <person name="Chin K."/>
            <person name="Wallace E."/>
            <person name="Zhen M."/>
            <person name="Gingras A.C."/>
            <person name="Derry W.B."/>
        </authorList>
    </citation>
    <scope>FUNCTION</scope>
    <scope>DISRUPTION PHENOTYPE</scope>
</reference>
<reference key="4">
    <citation type="journal article" date="2016" name="Curr. Biol.">
        <title>MRCK-1 Drives Apical Constriction in C. elegans by Linking Developmental Patterning to Force Generation.</title>
        <authorList>
            <person name="Marston D.J."/>
            <person name="Higgins C.D."/>
            <person name="Peters K.A."/>
            <person name="Cupp T.D."/>
            <person name="Dickinson D.J."/>
            <person name="Pani A.M."/>
            <person name="Moore R.P."/>
            <person name="Cox A.H."/>
            <person name="Kiehart D.P."/>
            <person name="Goldstein B."/>
        </authorList>
    </citation>
    <scope>FUNCTION</scope>
    <scope>INTERACTION WITH CDC-42 (GTP-BOUND)</scope>
    <scope>SUBCELLULAR LOCATION</scope>
    <scope>DEVELOPMENTAL STAGE</scope>
    <scope>DISRUPTION PHENOTYPE</scope>
</reference>
<reference key="5">
    <citation type="journal article" date="2023" name="Structure">
        <title>Structure and regulation of the myotonic dystrophy kinase-related Cdc42-binding kinase.</title>
        <authorList>
            <person name="Truebestein L."/>
            <person name="Antonioli S."/>
            <person name="Waltenberger E."/>
            <person name="Gehin C."/>
            <person name="Gavin A.C."/>
            <person name="Leonard T.A."/>
        </authorList>
    </citation>
    <scope>X-RAY CRYSTALLOGRAPHY (2.14 ANGSTROMS) OF 955-1534 IN COMPLEX WITH ZN(2+)</scope>
    <scope>FUNCTION</scope>
    <scope>CATALYTIC ACTIVITY</scope>
    <scope>HOMODIMER</scope>
    <scope>INTERACTION WITH CDC-42 (GTP-BOUND)</scope>
    <scope>DOMAIN</scope>
</reference>
<feature type="chain" id="PRO_0000432383" description="Serine/threonine-protein kinase mrck-1">
    <location>
        <begin position="1"/>
        <end position="1592"/>
    </location>
</feature>
<feature type="domain" description="Protein kinase" evidence="5">
    <location>
        <begin position="83"/>
        <end position="351"/>
    </location>
</feature>
<feature type="domain" description="AGC-kinase C-terminal" evidence="7">
    <location>
        <begin position="352"/>
        <end position="426"/>
    </location>
</feature>
<feature type="domain" description="PH" evidence="4">
    <location>
        <begin position="1026"/>
        <end position="1154"/>
    </location>
</feature>
<feature type="domain" description="CNH" evidence="8">
    <location>
        <begin position="1181"/>
        <end position="1479"/>
    </location>
</feature>
<feature type="domain" description="CRIB" evidence="3">
    <location>
        <begin position="1544"/>
        <end position="1557"/>
    </location>
</feature>
<feature type="zinc finger region" description="Phorbol-ester/DAG-type" evidence="6">
    <location>
        <begin position="957"/>
        <end position="1007"/>
    </location>
</feature>
<feature type="region of interest" description="Involved in homo-dimerization" evidence="13">
    <location>
        <begin position="1"/>
        <end position="954"/>
    </location>
</feature>
<feature type="region of interest" description="Disordered" evidence="9">
    <location>
        <begin position="782"/>
        <end position="801"/>
    </location>
</feature>
<feature type="region of interest" description="Involved in binding to membranes, with a preference for di-phosphorylated phosphoinositides (PIPs)" evidence="13">
    <location>
        <begin position="955"/>
        <end position="1534"/>
    </location>
</feature>
<feature type="region of interest" description="Involved in interaction with cdc-42 (GTP-bound). Deletion prevents rescue of a null mutant; furthermore deleted form of mrck-1 is no longer recruited to the cell cortex and instead appears to be completely cytoplasmic" evidence="12 13">
    <location>
        <begin position="1544"/>
        <end position="1557"/>
    </location>
</feature>
<feature type="coiled-coil region" evidence="2">
    <location>
        <begin position="444"/>
        <end position="782"/>
    </location>
</feature>
<feature type="coiled-coil region" evidence="2">
    <location>
        <begin position="811"/>
        <end position="871"/>
    </location>
</feature>
<feature type="compositionally biased region" description="Polar residues" evidence="9">
    <location>
        <begin position="782"/>
        <end position="796"/>
    </location>
</feature>
<feature type="active site" description="Proton acceptor" evidence="5">
    <location>
        <position position="207"/>
    </location>
</feature>
<feature type="binding site" evidence="5">
    <location>
        <begin position="89"/>
        <end position="97"/>
    </location>
    <ligand>
        <name>ATP</name>
        <dbReference type="ChEBI" id="CHEBI:30616"/>
    </ligand>
</feature>
<feature type="binding site" evidence="5">
    <location>
        <position position="112"/>
    </location>
    <ligand>
        <name>ATP</name>
        <dbReference type="ChEBI" id="CHEBI:30616"/>
    </ligand>
</feature>
<feature type="binding site" evidence="20">
    <location>
        <position position="958"/>
    </location>
    <ligand>
        <name>Zn(2+)</name>
        <dbReference type="ChEBI" id="CHEBI:29105"/>
        <label>1</label>
    </ligand>
</feature>
<feature type="binding site" evidence="20">
    <location>
        <position position="971"/>
    </location>
    <ligand>
        <name>Zn(2+)</name>
        <dbReference type="ChEBI" id="CHEBI:29105"/>
        <label>2</label>
    </ligand>
</feature>
<feature type="binding site" evidence="20">
    <location>
        <position position="974"/>
    </location>
    <ligand>
        <name>Zn(2+)</name>
        <dbReference type="ChEBI" id="CHEBI:29105"/>
        <label>2</label>
    </ligand>
</feature>
<feature type="binding site" evidence="20">
    <location>
        <position position="988"/>
    </location>
    <ligand>
        <name>Zn(2+)</name>
        <dbReference type="ChEBI" id="CHEBI:29105"/>
        <label>1</label>
    </ligand>
</feature>
<feature type="binding site" evidence="20">
    <location>
        <position position="991"/>
    </location>
    <ligand>
        <name>Zn(2+)</name>
        <dbReference type="ChEBI" id="CHEBI:29105"/>
        <label>1</label>
    </ligand>
</feature>
<feature type="binding site" evidence="20">
    <location>
        <position position="996"/>
    </location>
    <ligand>
        <name>Zn(2+)</name>
        <dbReference type="ChEBI" id="CHEBI:29105"/>
        <label>2</label>
    </ligand>
</feature>
<feature type="binding site" evidence="20">
    <location>
        <position position="999"/>
    </location>
    <ligand>
        <name>Zn(2+)</name>
        <dbReference type="ChEBI" id="CHEBI:29105"/>
        <label>2</label>
    </ligand>
</feature>
<feature type="binding site" evidence="20">
    <location>
        <position position="1007"/>
    </location>
    <ligand>
        <name>Zn(2+)</name>
        <dbReference type="ChEBI" id="CHEBI:29105"/>
        <label>1</label>
    </ligand>
</feature>
<feature type="modified residue" description="Phosphoserine" evidence="7">
    <location>
        <position position="415"/>
    </location>
</feature>
<feature type="modified residue" description="Phosphotyrosine" evidence="7">
    <location>
        <position position="416"/>
    </location>
</feature>
<feature type="strand" evidence="21">
    <location>
        <begin position="961"/>
        <end position="963"/>
    </location>
</feature>
<feature type="turn" evidence="21">
    <location>
        <begin position="972"/>
        <end position="974"/>
    </location>
</feature>
<feature type="strand" evidence="21">
    <location>
        <begin position="980"/>
        <end position="982"/>
    </location>
</feature>
<feature type="strand" evidence="21">
    <location>
        <begin position="985"/>
        <end position="987"/>
    </location>
</feature>
<feature type="strand" evidence="21">
    <location>
        <begin position="989"/>
        <end position="991"/>
    </location>
</feature>
<feature type="helix" evidence="21">
    <location>
        <begin position="997"/>
        <end position="1000"/>
    </location>
</feature>
<feature type="strand" evidence="21">
    <location>
        <begin position="1005"/>
        <end position="1008"/>
    </location>
</feature>
<feature type="turn" evidence="21">
    <location>
        <begin position="1021"/>
        <end position="1024"/>
    </location>
</feature>
<feature type="strand" evidence="21">
    <location>
        <begin position="1027"/>
        <end position="1036"/>
    </location>
</feature>
<feature type="helix" evidence="21">
    <location>
        <begin position="1041"/>
        <end position="1043"/>
    </location>
</feature>
<feature type="strand" evidence="21">
    <location>
        <begin position="1045"/>
        <end position="1053"/>
    </location>
</feature>
<feature type="strand" evidence="21">
    <location>
        <begin position="1056"/>
        <end position="1061"/>
    </location>
</feature>
<feature type="strand" evidence="21">
    <location>
        <begin position="1078"/>
        <end position="1082"/>
    </location>
</feature>
<feature type="strand" evidence="21">
    <location>
        <begin position="1089"/>
        <end position="1092"/>
    </location>
</feature>
<feature type="turn" evidence="21">
    <location>
        <begin position="1095"/>
        <end position="1100"/>
    </location>
</feature>
<feature type="helix" evidence="21">
    <location>
        <begin position="1103"/>
        <end position="1108"/>
    </location>
</feature>
<feature type="strand" evidence="21">
    <location>
        <begin position="1109"/>
        <end position="1116"/>
    </location>
</feature>
<feature type="helix" evidence="21">
    <location>
        <begin position="1123"/>
        <end position="1125"/>
    </location>
</feature>
<feature type="strand" evidence="21">
    <location>
        <begin position="1129"/>
        <end position="1135"/>
    </location>
</feature>
<feature type="helix" evidence="21">
    <location>
        <begin position="1139"/>
        <end position="1158"/>
    </location>
</feature>
<feature type="strand" evidence="21">
    <location>
        <begin position="1167"/>
        <end position="1173"/>
    </location>
</feature>
<feature type="turn" evidence="21">
    <location>
        <begin position="1175"/>
        <end position="1177"/>
    </location>
</feature>
<feature type="helix" evidence="21">
    <location>
        <begin position="1179"/>
        <end position="1183"/>
    </location>
</feature>
<feature type="strand" evidence="21">
    <location>
        <begin position="1184"/>
        <end position="1191"/>
    </location>
</feature>
<feature type="strand" evidence="21">
    <location>
        <begin position="1194"/>
        <end position="1199"/>
    </location>
</feature>
<feature type="strand" evidence="21">
    <location>
        <begin position="1202"/>
        <end position="1208"/>
    </location>
</feature>
<feature type="turn" evidence="21">
    <location>
        <begin position="1209"/>
        <end position="1212"/>
    </location>
</feature>
<feature type="strand" evidence="21">
    <location>
        <begin position="1213"/>
        <end position="1216"/>
    </location>
</feature>
<feature type="helix" evidence="21">
    <location>
        <begin position="1220"/>
        <end position="1223"/>
    </location>
</feature>
<feature type="strand" evidence="21">
    <location>
        <begin position="1228"/>
        <end position="1234"/>
    </location>
</feature>
<feature type="turn" evidence="21">
    <location>
        <begin position="1235"/>
        <end position="1238"/>
    </location>
</feature>
<feature type="strand" evidence="21">
    <location>
        <begin position="1239"/>
        <end position="1245"/>
    </location>
</feature>
<feature type="helix" evidence="21">
    <location>
        <begin position="1247"/>
        <end position="1249"/>
    </location>
</feature>
<feature type="strand" evidence="21">
    <location>
        <begin position="1251"/>
        <end position="1256"/>
    </location>
</feature>
<feature type="helix" evidence="21">
    <location>
        <begin position="1257"/>
        <end position="1261"/>
    </location>
</feature>
<feature type="strand" evidence="21">
    <location>
        <begin position="1278"/>
        <end position="1281"/>
    </location>
</feature>
<feature type="helix" evidence="21">
    <location>
        <begin position="1286"/>
        <end position="1288"/>
    </location>
</feature>
<feature type="strand" evidence="21">
    <location>
        <begin position="1292"/>
        <end position="1296"/>
    </location>
</feature>
<feature type="strand" evidence="21">
    <location>
        <begin position="1298"/>
        <end position="1306"/>
    </location>
</feature>
<feature type="strand" evidence="21">
    <location>
        <begin position="1312"/>
        <end position="1320"/>
    </location>
</feature>
<feature type="strand" evidence="21">
    <location>
        <begin position="1326"/>
        <end position="1331"/>
    </location>
</feature>
<feature type="strand" evidence="21">
    <location>
        <begin position="1334"/>
        <end position="1338"/>
    </location>
</feature>
<feature type="strand" evidence="21">
    <location>
        <begin position="1343"/>
        <end position="1347"/>
    </location>
</feature>
<feature type="strand" evidence="21">
    <location>
        <begin position="1368"/>
        <end position="1372"/>
    </location>
</feature>
<feature type="helix" evidence="21">
    <location>
        <begin position="1377"/>
        <end position="1384"/>
    </location>
</feature>
<feature type="strand" evidence="21">
    <location>
        <begin position="1390"/>
        <end position="1395"/>
    </location>
</feature>
<feature type="strand" evidence="21">
    <location>
        <begin position="1402"/>
        <end position="1409"/>
    </location>
</feature>
<feature type="strand" evidence="21">
    <location>
        <begin position="1411"/>
        <end position="1415"/>
    </location>
</feature>
<feature type="strand" evidence="21">
    <location>
        <begin position="1418"/>
        <end position="1420"/>
    </location>
</feature>
<feature type="strand" evidence="21">
    <location>
        <begin position="1433"/>
        <end position="1438"/>
    </location>
</feature>
<feature type="strand" evidence="21">
    <location>
        <begin position="1441"/>
        <end position="1445"/>
    </location>
</feature>
<feature type="strand" evidence="21">
    <location>
        <begin position="1447"/>
        <end position="1454"/>
    </location>
</feature>
<feature type="turn" evidence="21">
    <location>
        <begin position="1455"/>
        <end position="1458"/>
    </location>
</feature>
<feature type="strand" evidence="21">
    <location>
        <begin position="1459"/>
        <end position="1465"/>
    </location>
</feature>
<feature type="strand" evidence="21">
    <location>
        <begin position="1467"/>
        <end position="1471"/>
    </location>
</feature>
<feature type="strand" evidence="21">
    <location>
        <begin position="1476"/>
        <end position="1483"/>
    </location>
</feature>
<feature type="strand" evidence="21">
    <location>
        <begin position="1486"/>
        <end position="1494"/>
    </location>
</feature>
<feature type="strand" evidence="21">
    <location>
        <begin position="1497"/>
        <end position="1499"/>
    </location>
</feature>
<gene>
    <name evidence="19" type="primary">mrck-1</name>
    <name evidence="19" type="ORF">K08B12.5</name>
</gene>
<name>MRCK_CAEEL</name>
<organism evidence="18">
    <name type="scientific">Caenorhabditis elegans</name>
    <dbReference type="NCBI Taxonomy" id="6239"/>
    <lineage>
        <taxon>Eukaryota</taxon>
        <taxon>Metazoa</taxon>
        <taxon>Ecdysozoa</taxon>
        <taxon>Nematoda</taxon>
        <taxon>Chromadorea</taxon>
        <taxon>Rhabditida</taxon>
        <taxon>Rhabditina</taxon>
        <taxon>Rhabditomorpha</taxon>
        <taxon>Rhabditoidea</taxon>
        <taxon>Rhabditidae</taxon>
        <taxon>Peloderinae</taxon>
        <taxon>Caenorhabditis</taxon>
    </lineage>
</organism>
<proteinExistence type="evidence at protein level"/>
<accession>O01583</accession>
<evidence type="ECO:0000250" key="1">
    <source>
        <dbReference type="UniProtKB" id="Q5VT25"/>
    </source>
</evidence>
<evidence type="ECO:0000255" key="2"/>
<evidence type="ECO:0000255" key="3">
    <source>
        <dbReference type="PROSITE-ProRule" id="PRU00057"/>
    </source>
</evidence>
<evidence type="ECO:0000255" key="4">
    <source>
        <dbReference type="PROSITE-ProRule" id="PRU00145"/>
    </source>
</evidence>
<evidence type="ECO:0000255" key="5">
    <source>
        <dbReference type="PROSITE-ProRule" id="PRU00159"/>
    </source>
</evidence>
<evidence type="ECO:0000255" key="6">
    <source>
        <dbReference type="PROSITE-ProRule" id="PRU00226"/>
    </source>
</evidence>
<evidence type="ECO:0000255" key="7">
    <source>
        <dbReference type="PROSITE-ProRule" id="PRU00618"/>
    </source>
</evidence>
<evidence type="ECO:0000255" key="8">
    <source>
        <dbReference type="PROSITE-ProRule" id="PRU00795"/>
    </source>
</evidence>
<evidence type="ECO:0000256" key="9">
    <source>
        <dbReference type="SAM" id="MobiDB-lite"/>
    </source>
</evidence>
<evidence type="ECO:0000269" key="10">
    <source>
    </source>
</evidence>
<evidence type="ECO:0000269" key="11">
    <source>
    </source>
</evidence>
<evidence type="ECO:0000269" key="12">
    <source>
    </source>
</evidence>
<evidence type="ECO:0000269" key="13">
    <source>
    </source>
</evidence>
<evidence type="ECO:0000303" key="14">
    <source>
    </source>
</evidence>
<evidence type="ECO:0000305" key="15"/>
<evidence type="ECO:0000305" key="16">
    <source>
    </source>
</evidence>
<evidence type="ECO:0000305" key="17">
    <source>
    </source>
</evidence>
<evidence type="ECO:0000312" key="18">
    <source>
        <dbReference type="Proteomes" id="UP000001940"/>
    </source>
</evidence>
<evidence type="ECO:0000312" key="19">
    <source>
        <dbReference type="WormBase" id="K08B12.5a"/>
    </source>
</evidence>
<evidence type="ECO:0007744" key="20">
    <source>
        <dbReference type="PDB" id="7Z6E"/>
    </source>
</evidence>
<evidence type="ECO:0007829" key="21">
    <source>
        <dbReference type="PDB" id="7Z6E"/>
    </source>
</evidence>
<keyword id="KW-0002">3D-structure</keyword>
<keyword id="KW-0067">ATP-binding</keyword>
<keyword id="KW-0175">Coiled coil</keyword>
<keyword id="KW-0963">Cytoplasm</keyword>
<keyword id="KW-0418">Kinase</keyword>
<keyword id="KW-0460">Magnesium</keyword>
<keyword id="KW-0479">Metal-binding</keyword>
<keyword id="KW-0547">Nucleotide-binding</keyword>
<keyword id="KW-0597">Phosphoprotein</keyword>
<keyword id="KW-1185">Reference proteome</keyword>
<keyword id="KW-0723">Serine/threonine-protein kinase</keyword>
<keyword id="KW-0808">Transferase</keyword>
<keyword id="KW-0862">Zinc</keyword>
<keyword id="KW-0863">Zinc-finger</keyword>
<dbReference type="EC" id="2.7.11.1" evidence="13"/>
<dbReference type="EMBL" id="FO081273">
    <property type="protein sequence ID" value="CCD70382.1"/>
    <property type="molecule type" value="Genomic_DNA"/>
</dbReference>
<dbReference type="PIR" id="T25808">
    <property type="entry name" value="T25808"/>
</dbReference>
<dbReference type="RefSeq" id="NP_504599.2">
    <property type="nucleotide sequence ID" value="NM_072198.5"/>
</dbReference>
<dbReference type="PDB" id="7Z6E">
    <property type="method" value="X-ray"/>
    <property type="resolution" value="2.14 A"/>
    <property type="chains" value="A/B/C/D/E=955-1534"/>
</dbReference>
<dbReference type="PDBsum" id="7Z6E"/>
<dbReference type="SMR" id="O01583"/>
<dbReference type="DIP" id="DIP-25790N"/>
<dbReference type="FunCoup" id="O01583">
    <property type="interactions" value="1733"/>
</dbReference>
<dbReference type="STRING" id="6239.K08B12.5a.2"/>
<dbReference type="PaxDb" id="6239-K08B12.5.2"/>
<dbReference type="PeptideAtlas" id="O01583"/>
<dbReference type="EnsemblMetazoa" id="K08B12.5a.1">
    <property type="protein sequence ID" value="K08B12.5a.1"/>
    <property type="gene ID" value="WBGene00006437"/>
</dbReference>
<dbReference type="EnsemblMetazoa" id="K08B12.5a.2">
    <property type="protein sequence ID" value="K08B12.5a.2"/>
    <property type="gene ID" value="WBGene00006437"/>
</dbReference>
<dbReference type="GeneID" id="179013"/>
<dbReference type="KEGG" id="cel:CELE_K08B12.5"/>
<dbReference type="UCSC" id="K08B12.5.1">
    <property type="organism name" value="c. elegans"/>
</dbReference>
<dbReference type="AGR" id="WB:WBGene00006437"/>
<dbReference type="CTD" id="179013"/>
<dbReference type="WormBase" id="K08B12.5a">
    <property type="protein sequence ID" value="CE30818"/>
    <property type="gene ID" value="WBGene00006437"/>
    <property type="gene designation" value="mrck-1"/>
</dbReference>
<dbReference type="eggNOG" id="KOG0612">
    <property type="taxonomic scope" value="Eukaryota"/>
</dbReference>
<dbReference type="GeneTree" id="ENSGT01030000234517"/>
<dbReference type="HOGENOM" id="CLU_000288_140_3_1"/>
<dbReference type="InParanoid" id="O01583"/>
<dbReference type="OMA" id="CCDKVPP"/>
<dbReference type="OrthoDB" id="2156623at2759"/>
<dbReference type="PhylomeDB" id="O01583"/>
<dbReference type="Reactome" id="R-CEL-9013149">
    <property type="pathway name" value="RAC1 GTPase cycle"/>
</dbReference>
<dbReference type="Reactome" id="R-CEL-9013406">
    <property type="pathway name" value="RHOQ GTPase cycle"/>
</dbReference>
<dbReference type="PRO" id="PR:O01583"/>
<dbReference type="Proteomes" id="UP000001940">
    <property type="component" value="Chromosome V"/>
</dbReference>
<dbReference type="Bgee" id="WBGene00006437">
    <property type="expression patterns" value="Expressed in pharyngeal muscle cell (C elegans) and 4 other cell types or tissues"/>
</dbReference>
<dbReference type="ExpressionAtlas" id="O01583">
    <property type="expression patterns" value="baseline and differential"/>
</dbReference>
<dbReference type="GO" id="GO:0005938">
    <property type="term" value="C:cell cortex"/>
    <property type="evidence" value="ECO:0007669"/>
    <property type="project" value="UniProtKB-SubCell"/>
</dbReference>
<dbReference type="GO" id="GO:0005737">
    <property type="term" value="C:cytoplasm"/>
    <property type="evidence" value="ECO:0000314"/>
    <property type="project" value="WormBase"/>
</dbReference>
<dbReference type="GO" id="GO:0005856">
    <property type="term" value="C:cytoskeleton"/>
    <property type="evidence" value="ECO:0000318"/>
    <property type="project" value="GO_Central"/>
</dbReference>
<dbReference type="GO" id="GO:0005524">
    <property type="term" value="F:ATP binding"/>
    <property type="evidence" value="ECO:0007669"/>
    <property type="project" value="UniProtKB-KW"/>
</dbReference>
<dbReference type="GO" id="GO:0004687">
    <property type="term" value="F:myosin light chain kinase activity"/>
    <property type="evidence" value="ECO:0000314"/>
    <property type="project" value="WormBase"/>
</dbReference>
<dbReference type="GO" id="GO:0106310">
    <property type="term" value="F:protein serine kinase activity"/>
    <property type="evidence" value="ECO:0007669"/>
    <property type="project" value="RHEA"/>
</dbReference>
<dbReference type="GO" id="GO:0004674">
    <property type="term" value="F:protein serine/threonine kinase activity"/>
    <property type="evidence" value="ECO:0000318"/>
    <property type="project" value="GO_Central"/>
</dbReference>
<dbReference type="GO" id="GO:0008270">
    <property type="term" value="F:zinc ion binding"/>
    <property type="evidence" value="ECO:0007669"/>
    <property type="project" value="UniProtKB-KW"/>
</dbReference>
<dbReference type="GO" id="GO:0031032">
    <property type="term" value="P:actomyosin structure organization"/>
    <property type="evidence" value="ECO:0000318"/>
    <property type="project" value="GO_Central"/>
</dbReference>
<dbReference type="GO" id="GO:0009792">
    <property type="term" value="P:embryo development ending in birth or egg hatching"/>
    <property type="evidence" value="ECO:0000315"/>
    <property type="project" value="WormBase"/>
</dbReference>
<dbReference type="GO" id="GO:0010172">
    <property type="term" value="P:embryonic body morphogenesis"/>
    <property type="evidence" value="ECO:0000316"/>
    <property type="project" value="WormBase"/>
</dbReference>
<dbReference type="GO" id="GO:0048598">
    <property type="term" value="P:embryonic morphogenesis"/>
    <property type="evidence" value="ECO:0000316"/>
    <property type="project" value="WormBase"/>
</dbReference>
<dbReference type="GO" id="GO:0060562">
    <property type="term" value="P:epithelial tube morphogenesis"/>
    <property type="evidence" value="ECO:0000315"/>
    <property type="project" value="UniProtKB"/>
</dbReference>
<dbReference type="GO" id="GO:0002119">
    <property type="term" value="P:nematode larval development"/>
    <property type="evidence" value="ECO:0000315"/>
    <property type="project" value="WormBase"/>
</dbReference>
<dbReference type="GO" id="GO:2001137">
    <property type="term" value="P:positive regulation of endocytic recycling"/>
    <property type="evidence" value="ECO:0000315"/>
    <property type="project" value="UniProtKB"/>
</dbReference>
<dbReference type="GO" id="GO:0043547">
    <property type="term" value="P:positive regulation of GTPase activity"/>
    <property type="evidence" value="ECO:0000315"/>
    <property type="project" value="UniProtKB"/>
</dbReference>
<dbReference type="GO" id="GO:1903358">
    <property type="term" value="P:regulation of Golgi organization"/>
    <property type="evidence" value="ECO:0000315"/>
    <property type="project" value="UniProtKB"/>
</dbReference>
<dbReference type="CDD" id="cd20809">
    <property type="entry name" value="C1_MRCK"/>
    <property type="match status" value="1"/>
</dbReference>
<dbReference type="CDD" id="cd00132">
    <property type="entry name" value="CRIB"/>
    <property type="match status" value="1"/>
</dbReference>
<dbReference type="CDD" id="cd01243">
    <property type="entry name" value="PH_MRCK"/>
    <property type="match status" value="1"/>
</dbReference>
<dbReference type="CDD" id="cd05597">
    <property type="entry name" value="STKc_DMPK_like"/>
    <property type="match status" value="1"/>
</dbReference>
<dbReference type="FunFam" id="1.10.510.10:FF:000014">
    <property type="entry name" value="Non-specific serine/threonine protein kinase"/>
    <property type="match status" value="1"/>
</dbReference>
<dbReference type="FunFam" id="3.30.60.20:FF:000005">
    <property type="entry name" value="Non-specific serine/threonine protein kinase"/>
    <property type="match status" value="1"/>
</dbReference>
<dbReference type="FunFam" id="3.30.200.20:FF:001055">
    <property type="entry name" value="Serine/threonine-protein kinase MRCK beta"/>
    <property type="match status" value="1"/>
</dbReference>
<dbReference type="Gene3D" id="3.30.60.20">
    <property type="match status" value="1"/>
</dbReference>
<dbReference type="Gene3D" id="3.30.200.20">
    <property type="entry name" value="Phosphorylase Kinase, domain 1"/>
    <property type="match status" value="1"/>
</dbReference>
<dbReference type="Gene3D" id="2.30.29.30">
    <property type="entry name" value="Pleckstrin-homology domain (PH domain)/Phosphotyrosine-binding domain (PTB)"/>
    <property type="match status" value="1"/>
</dbReference>
<dbReference type="Gene3D" id="1.10.510.10">
    <property type="entry name" value="Transferase(Phosphotransferase) domain 1"/>
    <property type="match status" value="1"/>
</dbReference>
<dbReference type="InterPro" id="IPR000961">
    <property type="entry name" value="AGC-kinase_C"/>
</dbReference>
<dbReference type="InterPro" id="IPR046349">
    <property type="entry name" value="C1-like_sf"/>
</dbReference>
<dbReference type="InterPro" id="IPR001180">
    <property type="entry name" value="CNH_dom"/>
</dbReference>
<dbReference type="InterPro" id="IPR000095">
    <property type="entry name" value="CRIB_dom"/>
</dbReference>
<dbReference type="InterPro" id="IPR011009">
    <property type="entry name" value="Kinase-like_dom_sf"/>
</dbReference>
<dbReference type="InterPro" id="IPR002219">
    <property type="entry name" value="PE/DAG-bd"/>
</dbReference>
<dbReference type="InterPro" id="IPR011993">
    <property type="entry name" value="PH-like_dom_sf"/>
</dbReference>
<dbReference type="InterPro" id="IPR001849">
    <property type="entry name" value="PH_domain"/>
</dbReference>
<dbReference type="InterPro" id="IPR017892">
    <property type="entry name" value="Pkinase_C"/>
</dbReference>
<dbReference type="InterPro" id="IPR000719">
    <property type="entry name" value="Prot_kinase_dom"/>
</dbReference>
<dbReference type="InterPro" id="IPR017441">
    <property type="entry name" value="Protein_kinase_ATP_BS"/>
</dbReference>
<dbReference type="InterPro" id="IPR050839">
    <property type="entry name" value="Rho-assoc_Ser/Thr_Kinase"/>
</dbReference>
<dbReference type="InterPro" id="IPR008271">
    <property type="entry name" value="Ser/Thr_kinase_AS"/>
</dbReference>
<dbReference type="PANTHER" id="PTHR22988">
    <property type="entry name" value="MYOTONIC DYSTROPHY S/T KINASE-RELATED"/>
    <property type="match status" value="1"/>
</dbReference>
<dbReference type="PANTHER" id="PTHR22988:SF66">
    <property type="entry name" value="SERINE_THREONINE-PROTEIN KINASE GENGHIS KHAN"/>
    <property type="match status" value="1"/>
</dbReference>
<dbReference type="Pfam" id="PF00130">
    <property type="entry name" value="C1_1"/>
    <property type="match status" value="1"/>
</dbReference>
<dbReference type="Pfam" id="PF00780">
    <property type="entry name" value="CNH"/>
    <property type="match status" value="1"/>
</dbReference>
<dbReference type="Pfam" id="PF25346">
    <property type="entry name" value="PH_MRCK"/>
    <property type="match status" value="1"/>
</dbReference>
<dbReference type="Pfam" id="PF00069">
    <property type="entry name" value="Pkinase"/>
    <property type="match status" value="1"/>
</dbReference>
<dbReference type="Pfam" id="PF00433">
    <property type="entry name" value="Pkinase_C"/>
    <property type="match status" value="1"/>
</dbReference>
<dbReference type="SMART" id="SM00109">
    <property type="entry name" value="C1"/>
    <property type="match status" value="1"/>
</dbReference>
<dbReference type="SMART" id="SM00036">
    <property type="entry name" value="CNH"/>
    <property type="match status" value="1"/>
</dbReference>
<dbReference type="SMART" id="SM00285">
    <property type="entry name" value="PBD"/>
    <property type="match status" value="1"/>
</dbReference>
<dbReference type="SMART" id="SM00233">
    <property type="entry name" value="PH"/>
    <property type="match status" value="1"/>
</dbReference>
<dbReference type="SMART" id="SM00133">
    <property type="entry name" value="S_TK_X"/>
    <property type="match status" value="1"/>
</dbReference>
<dbReference type="SMART" id="SM00220">
    <property type="entry name" value="S_TKc"/>
    <property type="match status" value="1"/>
</dbReference>
<dbReference type="SUPFAM" id="SSF57889">
    <property type="entry name" value="Cysteine-rich domain"/>
    <property type="match status" value="1"/>
</dbReference>
<dbReference type="SUPFAM" id="SSF50729">
    <property type="entry name" value="PH domain-like"/>
    <property type="match status" value="1"/>
</dbReference>
<dbReference type="SUPFAM" id="SSF56112">
    <property type="entry name" value="Protein kinase-like (PK-like)"/>
    <property type="match status" value="1"/>
</dbReference>
<dbReference type="PROSITE" id="PS51285">
    <property type="entry name" value="AGC_KINASE_CTER"/>
    <property type="match status" value="1"/>
</dbReference>
<dbReference type="PROSITE" id="PS50219">
    <property type="entry name" value="CNH"/>
    <property type="match status" value="1"/>
</dbReference>
<dbReference type="PROSITE" id="PS50108">
    <property type="entry name" value="CRIB"/>
    <property type="match status" value="1"/>
</dbReference>
<dbReference type="PROSITE" id="PS50003">
    <property type="entry name" value="PH_DOMAIN"/>
    <property type="match status" value="1"/>
</dbReference>
<dbReference type="PROSITE" id="PS00107">
    <property type="entry name" value="PROTEIN_KINASE_ATP"/>
    <property type="match status" value="1"/>
</dbReference>
<dbReference type="PROSITE" id="PS50011">
    <property type="entry name" value="PROTEIN_KINASE_DOM"/>
    <property type="match status" value="1"/>
</dbReference>
<dbReference type="PROSITE" id="PS00108">
    <property type="entry name" value="PROTEIN_KINASE_ST"/>
    <property type="match status" value="1"/>
</dbReference>
<dbReference type="PROSITE" id="PS00479">
    <property type="entry name" value="ZF_DAG_PE_1"/>
    <property type="match status" value="1"/>
</dbReference>
<dbReference type="PROSITE" id="PS50081">
    <property type="entry name" value="ZF_DAG_PE_2"/>
    <property type="match status" value="1"/>
</dbReference>
<protein>
    <recommendedName>
        <fullName evidence="15">Serine/threonine-protein kinase mrck-1</fullName>
        <ecNumber evidence="13">2.7.11.1</ecNumber>
    </recommendedName>
    <alternativeName>
        <fullName evidence="14 19">Myotonic dystrophy kinase-related CDC42-binding kinase homolog</fullName>
    </alternativeName>
</protein>
<comment type="function">
    <text evidence="10 11 12 13 16">Serine/threonine-protein kinase (PubMed:19675126, PubMed:36854301). Involved in regulating endoderm precursor cell movements during early gastrulation; activates apical myosin and thereby increases actomyosin contractility and tension in the apical cell cortex, probably as a result of recruitment of mrck-1 to the cortex by a combination of interaction with active cdc-42 and membrane binding (PubMed:27451898, PubMed:36854301). May phosphorylate and inactivate the phosphatase mel-11, and thereby contribute to the regulation of myosin II contractility during embryonic elongation (PubMed:19675126). Involved in controlling canal length and Golgi/ER integrity during excretory canal elongation (PubMed:25743393).</text>
</comment>
<comment type="catalytic activity">
    <reaction evidence="17">
        <text>L-seryl-[protein] + ATP = O-phospho-L-seryl-[protein] + ADP + H(+)</text>
        <dbReference type="Rhea" id="RHEA:17989"/>
        <dbReference type="Rhea" id="RHEA-COMP:9863"/>
        <dbReference type="Rhea" id="RHEA-COMP:11604"/>
        <dbReference type="ChEBI" id="CHEBI:15378"/>
        <dbReference type="ChEBI" id="CHEBI:29999"/>
        <dbReference type="ChEBI" id="CHEBI:30616"/>
        <dbReference type="ChEBI" id="CHEBI:83421"/>
        <dbReference type="ChEBI" id="CHEBI:456216"/>
        <dbReference type="EC" id="2.7.11.1"/>
    </reaction>
</comment>
<comment type="catalytic activity">
    <reaction evidence="17">
        <text>L-threonyl-[protein] + ATP = O-phospho-L-threonyl-[protein] + ADP + H(+)</text>
        <dbReference type="Rhea" id="RHEA:46608"/>
        <dbReference type="Rhea" id="RHEA-COMP:11060"/>
        <dbReference type="Rhea" id="RHEA-COMP:11605"/>
        <dbReference type="ChEBI" id="CHEBI:15378"/>
        <dbReference type="ChEBI" id="CHEBI:30013"/>
        <dbReference type="ChEBI" id="CHEBI:30616"/>
        <dbReference type="ChEBI" id="CHEBI:61977"/>
        <dbReference type="ChEBI" id="CHEBI:456216"/>
        <dbReference type="EC" id="2.7.11.1"/>
    </reaction>
</comment>
<comment type="cofactor">
    <cofactor evidence="1">
        <name>Mg(2+)</name>
        <dbReference type="ChEBI" id="CHEBI:18420"/>
    </cofactor>
</comment>
<comment type="subunit">
    <text evidence="12 13">Homodimer, via N-terminal domains (PubMed:36854301). Interacts (via the CRIB domain) with cdc-42 (GTP-bound), but with a lower affinity for cdc-42 bound to GDP; the interaction is direct and may play a role in the recruitment of mrck-1 to the apical membrane (PubMed:27451898, PubMed:36854301).</text>
</comment>
<comment type="subcellular location">
    <subcellularLocation>
        <location evidence="10 12">Cytoplasm</location>
    </subcellularLocation>
    <subcellularLocation>
        <location evidence="12">Cytoplasm</location>
        <location evidence="12">Cell cortex</location>
    </subcellularLocation>
    <text evidence="10 12">Enriched in the apical cell cortex specifically in the gastrulating endoderm precursor cells (EPCs), but not in the apical domain of other early embryonic interphase cells (PubMed:27451898). Endoderm cell fate specification is necessary and sufficient for mrck-1 to localize apically (PubMed:27451898). Forms parallel punctate bundles in dorsal and ventral epidermal cells (PubMed:19675126).</text>
</comment>
<comment type="tissue specificity">
    <text evidence="10">Expressed in embryonic and L4 larval seam cells and in embryonic dorsal and ventral epidermal cells. Also expressed in the pharynx throughout development and in sublateral nerve cords in the L4 larva.</text>
</comment>
<comment type="developmental stage">
    <text evidence="12">Expressed in the gastrulating endoderm precursor cells (EPCs).</text>
</comment>
<comment type="domain">
    <text evidence="13">C-terminal region, including the diacylglycerol (DAG)-binding, PH and CNH domains, mediates interaction with membranes, with a preference for di-phosphorylated phosphoinositides (PIPs).</text>
</comment>
<comment type="disruption phenotype">
    <text evidence="10 11 12">Normal adult development, but progeny arrest at either the L1 stage or during embryogenesis (PubMed:19675126). RNAi-mediated knockdown causes excretory canal truncation, abnormal lumen and cyst formation. In addition, causes a reduced distribution of Golgi and ER components along the excretory canal length and a decrease in cdc-42 activation (PubMed:25743393). Gastrulation defects, in which endodermal precursor cells (EPC) consistently fail to move inward and instead divide on the embryo surface (PubMed:27451898). Apical surfaces of the EPCs constrict significantly more slowly than in wild-type (PubMed:27451898). Significant reduction in detectable phosphorylated regulatory myosin light chains in the apical domain of the EPCs (PubMed:27451898). Cadherin hmr-1 accumulates along the lateral contact between the two EPC cells, Ea and Ep, instead of its normal apicobasal localization (PubMed:27451898).</text>
</comment>
<comment type="similarity">
    <text evidence="15">Belongs to the protein kinase superfamily. AGC Ser/Thr protein kinase family. DMPK subfamily.</text>
</comment>
<sequence>MAEPPPDDSAPVRLKTLENIYMDGPSKKPEALSFETLIDSLICLYDECCNSTLRKEKCIAEFVESVKTVISKAKKLRLSRDDFEVLKVIGKGAFGEVAVVRMRGVGEIYAMKILNKWEMVKRAETACFREERDVLVYGDRRWITNLHYAFQDEKNLYFVMDYYIGGDMLTLLSKFVDHIPESMAKFYIAEMVLAIDSLHRLGYVHRDVKPDNVLLDMQGHIRLADFGSCLRILADGSVASNVAVGTPDYISPEILRAMEDGRGRYGKECDWWSLGICMYEMLYGTTPFYSERLVDTYGKIMSHQDMLDFPDDEIDWVVSEEAKDLIRQLICSSDVRFGRNGLSDFQLHPFFEGIDWNTIRDSNPPYVPEVSSPEDTSNFDVDVCEDDFTPCLQETQPPRVLAAFTGNHLPFVGFSYTHGSLLSDARSLTDEIRAIAQRCQGDAELMEKSVDGFMVELENEKAELVQKLKEAQTIIAQHVAENPRSEEDRNYESTIAQLKDEIQILNKRLEDEALAQQQQKPKDEIVAESEKKLKELKERNKQLVMEKSEIQRELDNINDHLDQVLVEKATVVQQRDDMQAELADVGDSLLTEKDSVKRLQDEAEKAKKQVADFEEKLKEIETEKIALIKKQEEVTIEARKSVETDDHLSEEVVAAKNTIASLQATNEERETEIKKLKQRMDEERASHTAQSEQEMKQLEAHYERAQKMLQDNVEQMNVENRGLRDEIEKLSQQMAALPRGGLNEQQLHEIFNWVSEEKATREEMENLTRKITGEVESLKNNSPLTTSNYIQNTPSGWGSRRMNNVARKDGLDLQRQLQAEIDAKLKLKAELKNSQEQYLTSAARLDDTEKRMASLMREVAMLKQQKNIENSSDSAFSSTMGRGDLMISMNNDYEMSNSSLMRQEMISRQSTPSYENAILLHDHQVPKRVDDLRYKQKPMKTASGIFSPVSISAMERGHNFERMKIKTPTKCGHCTSILIGLDRQGLFCQSCQYACHVSCAERVSQSCPVPEEERRPLGIDPTRGVGTAYEGLVKTPRAGGVRKGWQTAYVVVCDFKLYLYDCTVDRQNKMQDVKNEIRLVLDMRDPDFTVCGVSEADVIHAQKGDIPKIFRVTTTQILNSSSEYSSSSKFYTLFMAETEEEKRKWVVALSELKTLLRRSKLADRKAFLVKEVFDVTTLPSIRVAQCCAIIDRSKIVIGFSDHGLYCIEISRQLLIPVGGEKENKQRCVETVEYDEAEQLLMMIVGPAKDRHVRIVPSAALDGRDLKWIKVNDTKGCHLLAVGTNNPGGRAGFFAVAFKKSVTIFQIDRSEKRHKKWKDLAMPGTPQSIAIFNGRLYVGFSHSFRSWSLVGVDSSPVGSGDASGAVLQHISLVNMEDTSLQFLNQQTSYEAKLIVNVPGSPDEYLLVFNMIGLYVNEMGRRSRLPEVMFPTQAKYFAYHEPYLCVFSENEVDIFNVTLAEWVQTINLRSAKPLSGDGILSTCLCNDSPIFVLLQNVLQDQDSIEVPVNLASGSTDGRKVTRRKFTFRTIGKDDRSASERRSHIQISTPSDFMHIVHMGPAPVMELQQNFIDLQSNHSHTSSDKDSLNRSVNND</sequence>